<reference key="1">
    <citation type="journal article" date="2007" name="Genome Biol.">
        <title>Characterization and modeling of the Haemophilus influenzae core and supragenomes based on the complete genomic sequences of Rd and 12 clinical nontypeable strains.</title>
        <authorList>
            <person name="Hogg J.S."/>
            <person name="Hu F.Z."/>
            <person name="Janto B."/>
            <person name="Boissy R."/>
            <person name="Hayes J."/>
            <person name="Keefe R."/>
            <person name="Post J.C."/>
            <person name="Ehrlich G.D."/>
        </authorList>
    </citation>
    <scope>NUCLEOTIDE SEQUENCE [LARGE SCALE GENOMIC DNA]</scope>
    <source>
        <strain>PittGG</strain>
    </source>
</reference>
<evidence type="ECO:0000255" key="1">
    <source>
        <dbReference type="HAMAP-Rule" id="MF_01393"/>
    </source>
</evidence>
<gene>
    <name evidence="1" type="primary">atpB</name>
    <name type="ordered locus">CGSHiGG_05680</name>
</gene>
<dbReference type="EMBL" id="CP000672">
    <property type="protein sequence ID" value="ABR00051.1"/>
    <property type="molecule type" value="Genomic_DNA"/>
</dbReference>
<dbReference type="SMR" id="A5UGZ5"/>
<dbReference type="KEGG" id="hiq:CGSHiGG_05680"/>
<dbReference type="HOGENOM" id="CLU_041018_1_0_6"/>
<dbReference type="Proteomes" id="UP000001990">
    <property type="component" value="Chromosome"/>
</dbReference>
<dbReference type="GO" id="GO:0005886">
    <property type="term" value="C:plasma membrane"/>
    <property type="evidence" value="ECO:0007669"/>
    <property type="project" value="UniProtKB-SubCell"/>
</dbReference>
<dbReference type="GO" id="GO:0045259">
    <property type="term" value="C:proton-transporting ATP synthase complex"/>
    <property type="evidence" value="ECO:0007669"/>
    <property type="project" value="UniProtKB-KW"/>
</dbReference>
<dbReference type="GO" id="GO:0046933">
    <property type="term" value="F:proton-transporting ATP synthase activity, rotational mechanism"/>
    <property type="evidence" value="ECO:0007669"/>
    <property type="project" value="UniProtKB-UniRule"/>
</dbReference>
<dbReference type="GO" id="GO:0042777">
    <property type="term" value="P:proton motive force-driven plasma membrane ATP synthesis"/>
    <property type="evidence" value="ECO:0007669"/>
    <property type="project" value="TreeGrafter"/>
</dbReference>
<dbReference type="CDD" id="cd00310">
    <property type="entry name" value="ATP-synt_Fo_a_6"/>
    <property type="match status" value="1"/>
</dbReference>
<dbReference type="FunFam" id="1.20.120.220:FF:000002">
    <property type="entry name" value="ATP synthase subunit a"/>
    <property type="match status" value="1"/>
</dbReference>
<dbReference type="Gene3D" id="1.20.120.220">
    <property type="entry name" value="ATP synthase, F0 complex, subunit A"/>
    <property type="match status" value="1"/>
</dbReference>
<dbReference type="HAMAP" id="MF_01393">
    <property type="entry name" value="ATP_synth_a_bact"/>
    <property type="match status" value="1"/>
</dbReference>
<dbReference type="InterPro" id="IPR045082">
    <property type="entry name" value="ATP_syn_F0_a_bact/chloroplast"/>
</dbReference>
<dbReference type="InterPro" id="IPR000568">
    <property type="entry name" value="ATP_synth_F0_asu"/>
</dbReference>
<dbReference type="InterPro" id="IPR023011">
    <property type="entry name" value="ATP_synth_F0_asu_AS"/>
</dbReference>
<dbReference type="InterPro" id="IPR035908">
    <property type="entry name" value="F0_ATP_A_sf"/>
</dbReference>
<dbReference type="NCBIfam" id="TIGR01131">
    <property type="entry name" value="ATP_synt_6_or_A"/>
    <property type="match status" value="1"/>
</dbReference>
<dbReference type="NCBIfam" id="NF004477">
    <property type="entry name" value="PRK05815.1-1"/>
    <property type="match status" value="1"/>
</dbReference>
<dbReference type="PANTHER" id="PTHR42823">
    <property type="entry name" value="ATP SYNTHASE SUBUNIT A, CHLOROPLASTIC"/>
    <property type="match status" value="1"/>
</dbReference>
<dbReference type="PANTHER" id="PTHR42823:SF3">
    <property type="entry name" value="ATP SYNTHASE SUBUNIT A, CHLOROPLASTIC"/>
    <property type="match status" value="1"/>
</dbReference>
<dbReference type="Pfam" id="PF00119">
    <property type="entry name" value="ATP-synt_A"/>
    <property type="match status" value="1"/>
</dbReference>
<dbReference type="PRINTS" id="PR00123">
    <property type="entry name" value="ATPASEA"/>
</dbReference>
<dbReference type="SUPFAM" id="SSF81336">
    <property type="entry name" value="F1F0 ATP synthase subunit A"/>
    <property type="match status" value="1"/>
</dbReference>
<dbReference type="PROSITE" id="PS00449">
    <property type="entry name" value="ATPASE_A"/>
    <property type="match status" value="1"/>
</dbReference>
<keyword id="KW-0066">ATP synthesis</keyword>
<keyword id="KW-0997">Cell inner membrane</keyword>
<keyword id="KW-1003">Cell membrane</keyword>
<keyword id="KW-0138">CF(0)</keyword>
<keyword id="KW-0375">Hydrogen ion transport</keyword>
<keyword id="KW-0406">Ion transport</keyword>
<keyword id="KW-0472">Membrane</keyword>
<keyword id="KW-0812">Transmembrane</keyword>
<keyword id="KW-1133">Transmembrane helix</keyword>
<keyword id="KW-0813">Transport</keyword>
<sequence>MSGQTTSEYISHHLSFLKTGDGFWNVHIDTLFFSILAAVIFLFVFSRVGKKATTGVPGKMQCLVEIVVEWVNGIVKENFHGPRNVVAPLALTIFCWVFIMNAIDLIPVDFLPQFAGLFGIHYLRAVPTADISATLGMSICVFFLILFYTIKSKGFKGLVKEYTLHPFNHWAFIPVNFILETVTLLAKPISLAFRLFGNMYAGELIFILIAVMYSANMAIAALGIPLHLAWAIFHILVITLQAFIFMMLTVVYLSIAYNKADH</sequence>
<feature type="chain" id="PRO_0000362322" description="ATP synthase subunit a">
    <location>
        <begin position="1"/>
        <end position="262"/>
    </location>
</feature>
<feature type="transmembrane region" description="Helical" evidence="1">
    <location>
        <begin position="26"/>
        <end position="46"/>
    </location>
</feature>
<feature type="transmembrane region" description="Helical" evidence="1">
    <location>
        <begin position="86"/>
        <end position="106"/>
    </location>
</feature>
<feature type="transmembrane region" description="Helical" evidence="1">
    <location>
        <begin position="130"/>
        <end position="150"/>
    </location>
</feature>
<feature type="transmembrane region" description="Helical" evidence="1">
    <location>
        <begin position="204"/>
        <end position="226"/>
    </location>
</feature>
<feature type="transmembrane region" description="Helical" evidence="1">
    <location>
        <begin position="240"/>
        <end position="260"/>
    </location>
</feature>
<organism>
    <name type="scientific">Haemophilus influenzae (strain PittGG)</name>
    <dbReference type="NCBI Taxonomy" id="374931"/>
    <lineage>
        <taxon>Bacteria</taxon>
        <taxon>Pseudomonadati</taxon>
        <taxon>Pseudomonadota</taxon>
        <taxon>Gammaproteobacteria</taxon>
        <taxon>Pasteurellales</taxon>
        <taxon>Pasteurellaceae</taxon>
        <taxon>Haemophilus</taxon>
    </lineage>
</organism>
<proteinExistence type="inferred from homology"/>
<protein>
    <recommendedName>
        <fullName evidence="1">ATP synthase subunit a</fullName>
    </recommendedName>
    <alternativeName>
        <fullName evidence="1">ATP synthase F0 sector subunit a</fullName>
    </alternativeName>
    <alternativeName>
        <fullName evidence="1">F-ATPase subunit 6</fullName>
    </alternativeName>
</protein>
<comment type="function">
    <text evidence="1">Key component of the proton channel; it plays a direct role in the translocation of protons across the membrane.</text>
</comment>
<comment type="subunit">
    <text evidence="1">F-type ATPases have 2 components, CF(1) - the catalytic core - and CF(0) - the membrane proton channel. CF(1) has five subunits: alpha(3), beta(3), gamma(1), delta(1), epsilon(1). CF(0) has three main subunits: a(1), b(2) and c(9-12). The alpha and beta chains form an alternating ring which encloses part of the gamma chain. CF(1) is attached to CF(0) by a central stalk formed by the gamma and epsilon chains, while a peripheral stalk is formed by the delta and b chains.</text>
</comment>
<comment type="subcellular location">
    <subcellularLocation>
        <location evidence="1">Cell inner membrane</location>
        <topology evidence="1">Multi-pass membrane protein</topology>
    </subcellularLocation>
</comment>
<comment type="similarity">
    <text evidence="1">Belongs to the ATPase A chain family.</text>
</comment>
<name>ATP6_HAEIG</name>
<accession>A5UGZ5</accession>